<gene>
    <name type="ordered locus">LMOf2365_0385</name>
</gene>
<evidence type="ECO:0000255" key="1">
    <source>
        <dbReference type="HAMAP-Rule" id="MF_00918"/>
    </source>
</evidence>
<organism>
    <name type="scientific">Listeria monocytogenes serotype 4b (strain F2365)</name>
    <dbReference type="NCBI Taxonomy" id="265669"/>
    <lineage>
        <taxon>Bacteria</taxon>
        <taxon>Bacillati</taxon>
        <taxon>Bacillota</taxon>
        <taxon>Bacilli</taxon>
        <taxon>Bacillales</taxon>
        <taxon>Listeriaceae</taxon>
        <taxon>Listeria</taxon>
    </lineage>
</organism>
<feature type="chain" id="PRO_0000175836" description="Probable transcriptional regulatory protein LMOf2365_0385">
    <location>
        <begin position="1"/>
        <end position="239"/>
    </location>
</feature>
<proteinExistence type="inferred from homology"/>
<sequence length="239" mass="26696">MGRKWANIKEKKASKDKTNSRIYAKFGIEIYVAAKSGDPDPHANQKLRFVIERAKTYNVPKHIIDRAIEKAKGTGDETYSELRYEGFGPNGSMIIVDALTNNVNRTASDVRAAYSKNGGNMGVSGSVAYMFDNTAIFGVEGKDADELLELLMEVDIDVRDILDEDGQAIIYAEPEDFHKVQEGLKAAGIEEFTVAEIEMIPQNDIQLSGEDLEKFEKLIDALEDLEDVQKVYHNVELED</sequence>
<comment type="subcellular location">
    <subcellularLocation>
        <location evidence="1">Cytoplasm</location>
    </subcellularLocation>
</comment>
<comment type="similarity">
    <text evidence="1">Belongs to the TACO1 family. YeeN subfamily.</text>
</comment>
<reference key="1">
    <citation type="journal article" date="2004" name="Nucleic Acids Res.">
        <title>Whole genome comparisons of serotype 4b and 1/2a strains of the food-borne pathogen Listeria monocytogenes reveal new insights into the core genome components of this species.</title>
        <authorList>
            <person name="Nelson K.E."/>
            <person name="Fouts D.E."/>
            <person name="Mongodin E.F."/>
            <person name="Ravel J."/>
            <person name="DeBoy R.T."/>
            <person name="Kolonay J.F."/>
            <person name="Rasko D.A."/>
            <person name="Angiuoli S.V."/>
            <person name="Gill S.R."/>
            <person name="Paulsen I.T."/>
            <person name="Peterson J.D."/>
            <person name="White O."/>
            <person name="Nelson W.C."/>
            <person name="Nierman W.C."/>
            <person name="Beanan M.J."/>
            <person name="Brinkac L.M."/>
            <person name="Daugherty S.C."/>
            <person name="Dodson R.J."/>
            <person name="Durkin A.S."/>
            <person name="Madupu R."/>
            <person name="Haft D.H."/>
            <person name="Selengut J."/>
            <person name="Van Aken S.E."/>
            <person name="Khouri H.M."/>
            <person name="Fedorova N."/>
            <person name="Forberger H.A."/>
            <person name="Tran B."/>
            <person name="Kathariou S."/>
            <person name="Wonderling L.D."/>
            <person name="Uhlich G.A."/>
            <person name="Bayles D.O."/>
            <person name="Luchansky J.B."/>
            <person name="Fraser C.M."/>
        </authorList>
    </citation>
    <scope>NUCLEOTIDE SEQUENCE [LARGE SCALE GENOMIC DNA]</scope>
    <source>
        <strain>F2365</strain>
    </source>
</reference>
<name>Y385_LISMF</name>
<keyword id="KW-0963">Cytoplasm</keyword>
<keyword id="KW-0238">DNA-binding</keyword>
<keyword id="KW-0804">Transcription</keyword>
<keyword id="KW-0805">Transcription regulation</keyword>
<dbReference type="EMBL" id="AE017262">
    <property type="protein sequence ID" value="AAT03170.1"/>
    <property type="molecule type" value="Genomic_DNA"/>
</dbReference>
<dbReference type="RefSeq" id="WP_010958727.1">
    <property type="nucleotide sequence ID" value="NC_002973.6"/>
</dbReference>
<dbReference type="SMR" id="Q723U1"/>
<dbReference type="KEGG" id="lmf:LMOf2365_0385"/>
<dbReference type="HOGENOM" id="CLU_062974_2_0_9"/>
<dbReference type="GO" id="GO:0005829">
    <property type="term" value="C:cytosol"/>
    <property type="evidence" value="ECO:0007669"/>
    <property type="project" value="TreeGrafter"/>
</dbReference>
<dbReference type="GO" id="GO:0003677">
    <property type="term" value="F:DNA binding"/>
    <property type="evidence" value="ECO:0007669"/>
    <property type="project" value="UniProtKB-UniRule"/>
</dbReference>
<dbReference type="GO" id="GO:0006355">
    <property type="term" value="P:regulation of DNA-templated transcription"/>
    <property type="evidence" value="ECO:0007669"/>
    <property type="project" value="UniProtKB-UniRule"/>
</dbReference>
<dbReference type="FunFam" id="1.10.10.200:FF:000003">
    <property type="entry name" value="Probable transcriptional regulatory protein YeeN"/>
    <property type="match status" value="1"/>
</dbReference>
<dbReference type="FunFam" id="3.30.70.980:FF:000004">
    <property type="entry name" value="Probable transcriptional regulatory protein YeeN"/>
    <property type="match status" value="1"/>
</dbReference>
<dbReference type="Gene3D" id="1.10.10.200">
    <property type="match status" value="1"/>
</dbReference>
<dbReference type="Gene3D" id="3.30.70.980">
    <property type="match status" value="2"/>
</dbReference>
<dbReference type="HAMAP" id="MF_00693">
    <property type="entry name" value="Transcrip_reg_TACO1"/>
    <property type="match status" value="1"/>
</dbReference>
<dbReference type="HAMAP" id="MF_00918">
    <property type="entry name" value="Transcrip_reg_TACO1_YeeN"/>
    <property type="match status" value="1"/>
</dbReference>
<dbReference type="InterPro" id="IPR017856">
    <property type="entry name" value="Integrase-like_N"/>
</dbReference>
<dbReference type="InterPro" id="IPR048300">
    <property type="entry name" value="TACO1_YebC-like_2nd/3rd_dom"/>
</dbReference>
<dbReference type="InterPro" id="IPR049083">
    <property type="entry name" value="TACO1_YebC_N"/>
</dbReference>
<dbReference type="InterPro" id="IPR002876">
    <property type="entry name" value="Transcrip_reg_TACO1-like"/>
</dbReference>
<dbReference type="InterPro" id="IPR026564">
    <property type="entry name" value="Transcrip_reg_TACO1-like_dom3"/>
</dbReference>
<dbReference type="InterPro" id="IPR026562">
    <property type="entry name" value="Transcrip_reg_TACO1_YeeN"/>
</dbReference>
<dbReference type="InterPro" id="IPR029072">
    <property type="entry name" value="YebC-like"/>
</dbReference>
<dbReference type="NCBIfam" id="NF001030">
    <property type="entry name" value="PRK00110.1"/>
    <property type="match status" value="1"/>
</dbReference>
<dbReference type="NCBIfam" id="NF009044">
    <property type="entry name" value="PRK12378.1"/>
    <property type="match status" value="1"/>
</dbReference>
<dbReference type="NCBIfam" id="TIGR01033">
    <property type="entry name" value="YebC/PmpR family DNA-binding transcriptional regulator"/>
    <property type="match status" value="1"/>
</dbReference>
<dbReference type="PANTHER" id="PTHR12532">
    <property type="entry name" value="TRANSLATIONAL ACTIVATOR OF CYTOCHROME C OXIDASE 1"/>
    <property type="match status" value="1"/>
</dbReference>
<dbReference type="PANTHER" id="PTHR12532:SF0">
    <property type="entry name" value="TRANSLATIONAL ACTIVATOR OF CYTOCHROME C OXIDASE 1"/>
    <property type="match status" value="1"/>
</dbReference>
<dbReference type="Pfam" id="PF20772">
    <property type="entry name" value="TACO1_YebC_N"/>
    <property type="match status" value="1"/>
</dbReference>
<dbReference type="Pfam" id="PF01709">
    <property type="entry name" value="Transcrip_reg"/>
    <property type="match status" value="1"/>
</dbReference>
<dbReference type="SUPFAM" id="SSF75625">
    <property type="entry name" value="YebC-like"/>
    <property type="match status" value="1"/>
</dbReference>
<protein>
    <recommendedName>
        <fullName evidence="1">Probable transcriptional regulatory protein LMOf2365_0385</fullName>
    </recommendedName>
</protein>
<accession>Q723U1</accession>